<feature type="chain" id="PRO_1000017616" description="Large ribosomal subunit protein bL27">
    <location>
        <begin position="1"/>
        <end position="89"/>
    </location>
</feature>
<feature type="region of interest" description="Disordered" evidence="2">
    <location>
        <begin position="1"/>
        <end position="20"/>
    </location>
</feature>
<evidence type="ECO:0000255" key="1">
    <source>
        <dbReference type="HAMAP-Rule" id="MF_00539"/>
    </source>
</evidence>
<evidence type="ECO:0000256" key="2">
    <source>
        <dbReference type="SAM" id="MobiDB-lite"/>
    </source>
</evidence>
<evidence type="ECO:0000305" key="3"/>
<protein>
    <recommendedName>
        <fullName evidence="1">Large ribosomal subunit protein bL27</fullName>
    </recommendedName>
    <alternativeName>
        <fullName evidence="3">50S ribosomal protein L27</fullName>
    </alternativeName>
</protein>
<dbReference type="EMBL" id="CP000699">
    <property type="protein sequence ID" value="ABQ70237.1"/>
    <property type="molecule type" value="Genomic_DNA"/>
</dbReference>
<dbReference type="SMR" id="A5VD71"/>
<dbReference type="STRING" id="392499.Swit_3892"/>
<dbReference type="PaxDb" id="392499-Swit_3892"/>
<dbReference type="KEGG" id="swi:Swit_3892"/>
<dbReference type="eggNOG" id="COG0211">
    <property type="taxonomic scope" value="Bacteria"/>
</dbReference>
<dbReference type="HOGENOM" id="CLU_095424_4_1_5"/>
<dbReference type="OrthoDB" id="9803474at2"/>
<dbReference type="Proteomes" id="UP000001989">
    <property type="component" value="Chromosome"/>
</dbReference>
<dbReference type="GO" id="GO:0022625">
    <property type="term" value="C:cytosolic large ribosomal subunit"/>
    <property type="evidence" value="ECO:0007669"/>
    <property type="project" value="TreeGrafter"/>
</dbReference>
<dbReference type="GO" id="GO:0003735">
    <property type="term" value="F:structural constituent of ribosome"/>
    <property type="evidence" value="ECO:0007669"/>
    <property type="project" value="InterPro"/>
</dbReference>
<dbReference type="GO" id="GO:0006412">
    <property type="term" value="P:translation"/>
    <property type="evidence" value="ECO:0007669"/>
    <property type="project" value="UniProtKB-UniRule"/>
</dbReference>
<dbReference type="FunFam" id="2.40.50.100:FF:000020">
    <property type="entry name" value="50S ribosomal protein L27"/>
    <property type="match status" value="1"/>
</dbReference>
<dbReference type="Gene3D" id="2.40.50.100">
    <property type="match status" value="1"/>
</dbReference>
<dbReference type="HAMAP" id="MF_00539">
    <property type="entry name" value="Ribosomal_bL27"/>
    <property type="match status" value="1"/>
</dbReference>
<dbReference type="InterPro" id="IPR001684">
    <property type="entry name" value="Ribosomal_bL27"/>
</dbReference>
<dbReference type="InterPro" id="IPR018261">
    <property type="entry name" value="Ribosomal_bL27_CS"/>
</dbReference>
<dbReference type="NCBIfam" id="TIGR00062">
    <property type="entry name" value="L27"/>
    <property type="match status" value="1"/>
</dbReference>
<dbReference type="PANTHER" id="PTHR15893:SF0">
    <property type="entry name" value="LARGE RIBOSOMAL SUBUNIT PROTEIN BL27M"/>
    <property type="match status" value="1"/>
</dbReference>
<dbReference type="PANTHER" id="PTHR15893">
    <property type="entry name" value="RIBOSOMAL PROTEIN L27"/>
    <property type="match status" value="1"/>
</dbReference>
<dbReference type="Pfam" id="PF01016">
    <property type="entry name" value="Ribosomal_L27"/>
    <property type="match status" value="1"/>
</dbReference>
<dbReference type="PRINTS" id="PR00063">
    <property type="entry name" value="RIBOSOMALL27"/>
</dbReference>
<dbReference type="SUPFAM" id="SSF110324">
    <property type="entry name" value="Ribosomal L27 protein-like"/>
    <property type="match status" value="1"/>
</dbReference>
<dbReference type="PROSITE" id="PS00831">
    <property type="entry name" value="RIBOSOMAL_L27"/>
    <property type="match status" value="1"/>
</dbReference>
<gene>
    <name evidence="1" type="primary">rpmA</name>
    <name type="ordered locus">Swit_3892</name>
</gene>
<keyword id="KW-1185">Reference proteome</keyword>
<keyword id="KW-0687">Ribonucleoprotein</keyword>
<keyword id="KW-0689">Ribosomal protein</keyword>
<sequence>MAHKKAGGSSRNGRDSAGRRLGVKKFGGELVIGGNIIIRQRGTKVYPGRNVGIGKDHTLFALTDGRVAFHSGKLGRKYVSVDTLAEAAE</sequence>
<organism>
    <name type="scientific">Rhizorhabdus wittichii (strain DSM 6014 / CCUG 31198 / JCM 15750 / NBRC 105917 / EY 4224 / RW1)</name>
    <name type="common">Sphingomonas wittichii</name>
    <dbReference type="NCBI Taxonomy" id="392499"/>
    <lineage>
        <taxon>Bacteria</taxon>
        <taxon>Pseudomonadati</taxon>
        <taxon>Pseudomonadota</taxon>
        <taxon>Alphaproteobacteria</taxon>
        <taxon>Sphingomonadales</taxon>
        <taxon>Sphingomonadaceae</taxon>
        <taxon>Rhizorhabdus</taxon>
    </lineage>
</organism>
<name>RL27_RHIWR</name>
<comment type="similarity">
    <text evidence="1">Belongs to the bacterial ribosomal protein bL27 family.</text>
</comment>
<proteinExistence type="inferred from homology"/>
<reference key="1">
    <citation type="journal article" date="2010" name="J. Bacteriol.">
        <title>Genome sequence of the dioxin-mineralizing bacterium Sphingomonas wittichii RW1.</title>
        <authorList>
            <person name="Miller T.R."/>
            <person name="Delcher A.L."/>
            <person name="Salzberg S.L."/>
            <person name="Saunders E."/>
            <person name="Detter J.C."/>
            <person name="Halden R.U."/>
        </authorList>
    </citation>
    <scope>NUCLEOTIDE SEQUENCE [LARGE SCALE GENOMIC DNA]</scope>
    <source>
        <strain>DSM 6014 / CCUG 31198 / JCM 15750 / NBRC 105917 / EY 4224 / RW1</strain>
    </source>
</reference>
<accession>A5VD71</accession>